<accession>A6NMB1</accession>
<keyword id="KW-0130">Cell adhesion</keyword>
<keyword id="KW-1015">Disulfide bond</keyword>
<keyword id="KW-0325">Glycoprotein</keyword>
<keyword id="KW-0393">Immunoglobulin domain</keyword>
<keyword id="KW-0430">Lectin</keyword>
<keyword id="KW-0472">Membrane</keyword>
<keyword id="KW-1185">Reference proteome</keyword>
<keyword id="KW-0677">Repeat</keyword>
<keyword id="KW-0732">Signal</keyword>
<keyword id="KW-0812">Transmembrane</keyword>
<keyword id="KW-1133">Transmembrane helix</keyword>
<evidence type="ECO:0000250" key="1"/>
<evidence type="ECO:0000255" key="2"/>
<evidence type="ECO:0000255" key="3">
    <source>
        <dbReference type="PROSITE-ProRule" id="PRU00114"/>
    </source>
</evidence>
<evidence type="ECO:0000269" key="4">
    <source>
    </source>
</evidence>
<evidence type="ECO:0000305" key="5"/>
<protein>
    <recommendedName>
        <fullName>Sialic acid-binding Ig-like lectin 16</fullName>
        <shortName>Siglec-16</shortName>
    </recommendedName>
    <alternativeName>
        <fullName>Siglec-P16</fullName>
    </alternativeName>
</protein>
<proteinExistence type="evidence at transcript level"/>
<comment type="function">
    <text evidence="1">Putative adhesion molecule that mediates sialic-acid dependent binding to cells.</text>
</comment>
<comment type="subcellular location">
    <subcellularLocation>
        <location evidence="4">Membrane</location>
        <topology evidence="4">Single-pass type I membrane protein</topology>
    </subcellularLocation>
</comment>
<comment type="tissue specificity">
    <text evidence="4">Expressed in bone marrow, fetal brain, fetal liver, lung and salivary gland. Detected in brain, macrophage, cancerous esophagus and lung at protein level.</text>
</comment>
<comment type="similarity">
    <text evidence="5">Belongs to the immunoglobulin superfamily. SIGLEC (sialic acid binding Ig-like lectin) family.</text>
</comment>
<comment type="caution">
    <text evidence="5">According to PubMed:18629938, the SIGLECP16 sequence, that was initially classified as a pseudogene, has a 4 bp deletion when compared with the sequence shown in this entry. This deletion is a polymorphism with a frequency of around 50% in the UK population. The frameshifted allele is non-functional whereas the sequence displayed here seems to be functional. The functional allele has been named SIGLEC16 in PubMed:18629938.</text>
</comment>
<sequence length="481" mass="52992">MLLLPLLLPVLGAGSLNKDPSYSLQVQRQVPVPEGLCVIVSCNLSYPRDGWDESTAAYGYWFKGRTSPKTGAPVATNNQSREVAMSTRDRFQLTGDPGKGSCSLVIRDAQREDEAWYFFRVERGSRVRHSFLSNAFFLKVTALTQKPDVYIPETLEPGQPVTVICVFNWAFKKCPAPSFSWTGAALSPRRTRPSTSHFSVLSFTPSPQDHDTDLTCHVDFSRKGVSAQRTVRLRVASLELQGNVIYLEVQKGQFLRLLCAADSQPPATLSWVLQDRVLSSSHPWGPRTLGLELPGVKAGDSGRYTCRAENRLGSQQRALDLSVQYPPENLRVMVSQANRTVLENLRNGTSLRVLEGQSLRLVCVTHSSPPARLSWTWGEQTVGPSQPSDPGVLQLPRVQMEHEGEFTCHARHPLGSQRVSLSFSVHCKSGPMTGVVLVAVGEVAMKILLLCLCLILLRVRSCRRKAARAALGMEAADAVTD</sequence>
<name>SIG16_HUMAN</name>
<organism>
    <name type="scientific">Homo sapiens</name>
    <name type="common">Human</name>
    <dbReference type="NCBI Taxonomy" id="9606"/>
    <lineage>
        <taxon>Eukaryota</taxon>
        <taxon>Metazoa</taxon>
        <taxon>Chordata</taxon>
        <taxon>Craniata</taxon>
        <taxon>Vertebrata</taxon>
        <taxon>Euteleostomi</taxon>
        <taxon>Mammalia</taxon>
        <taxon>Eutheria</taxon>
        <taxon>Euarchontoglires</taxon>
        <taxon>Primates</taxon>
        <taxon>Haplorrhini</taxon>
        <taxon>Catarrhini</taxon>
        <taxon>Hominidae</taxon>
        <taxon>Homo</taxon>
    </lineage>
</organism>
<feature type="signal peptide" evidence="2">
    <location>
        <begin position="1"/>
        <end position="16"/>
    </location>
</feature>
<feature type="chain" id="PRO_0000332258" description="Sialic acid-binding Ig-like lectin 16">
    <location>
        <begin position="17"/>
        <end position="481"/>
    </location>
</feature>
<feature type="topological domain" description="Extracellular" evidence="2">
    <location>
        <begin position="17"/>
        <end position="434"/>
    </location>
</feature>
<feature type="transmembrane region" description="Helical" evidence="2">
    <location>
        <begin position="435"/>
        <end position="455"/>
    </location>
</feature>
<feature type="topological domain" description="Cytoplasmic" evidence="2">
    <location>
        <begin position="456"/>
        <end position="481"/>
    </location>
</feature>
<feature type="domain" description="Ig-like V-type">
    <location>
        <begin position="19"/>
        <end position="122"/>
    </location>
</feature>
<feature type="domain" description="Ig-like C2-type 1">
    <location>
        <begin position="147"/>
        <end position="232"/>
    </location>
</feature>
<feature type="domain" description="Ig-like C2-type 2">
    <location>
        <begin position="238"/>
        <end position="322"/>
    </location>
</feature>
<feature type="domain" description="Ig-like C2-type 3">
    <location>
        <begin position="327"/>
        <end position="424"/>
    </location>
</feature>
<feature type="binding site" evidence="1">
    <location>
        <position position="120"/>
    </location>
    <ligand>
        <name>N-acetylneuraminate</name>
        <dbReference type="ChEBI" id="CHEBI:35418"/>
    </ligand>
</feature>
<feature type="glycosylation site" description="N-linked (GlcNAc...) asparagine" evidence="2">
    <location>
        <position position="43"/>
    </location>
</feature>
<feature type="glycosylation site" description="N-linked (GlcNAc...) asparagine" evidence="2">
    <location>
        <position position="78"/>
    </location>
</feature>
<feature type="glycosylation site" description="N-linked (GlcNAc...) asparagine" evidence="2">
    <location>
        <position position="338"/>
    </location>
</feature>
<feature type="glycosylation site" description="N-linked (GlcNAc...) asparagine" evidence="2">
    <location>
        <position position="347"/>
    </location>
</feature>
<feature type="disulfide bond" evidence="3">
    <location>
        <begin position="37"/>
        <end position="174"/>
    </location>
</feature>
<feature type="disulfide bond" evidence="3">
    <location>
        <begin position="42"/>
        <end position="102"/>
    </location>
</feature>
<feature type="disulfide bond" evidence="3">
    <location>
        <begin position="165"/>
        <end position="216"/>
    </location>
</feature>
<feature type="disulfide bond" evidence="3">
    <location>
        <begin position="259"/>
        <end position="306"/>
    </location>
</feature>
<feature type="disulfide bond" evidence="3">
    <location>
        <begin position="363"/>
        <end position="408"/>
    </location>
</feature>
<dbReference type="EMBL" id="AC011452">
    <property type="status" value="NOT_ANNOTATED_CDS"/>
    <property type="molecule type" value="Genomic_DNA"/>
</dbReference>
<dbReference type="EMBL" id="BC039008">
    <property type="status" value="NOT_ANNOTATED_CDS"/>
    <property type="molecule type" value="mRNA"/>
</dbReference>
<dbReference type="SMR" id="A6NMB1"/>
<dbReference type="FunCoup" id="A6NMB1">
    <property type="interactions" value="645"/>
</dbReference>
<dbReference type="IntAct" id="A6NMB1">
    <property type="interactions" value="1"/>
</dbReference>
<dbReference type="GlyCosmos" id="A6NMB1">
    <property type="glycosylation" value="4 sites, No reported glycans"/>
</dbReference>
<dbReference type="GlyGen" id="A6NMB1">
    <property type="glycosylation" value="5 sites, 1 N-linked glycan (1 site), 1 O-linked glycan (1 site)"/>
</dbReference>
<dbReference type="iPTMnet" id="A6NMB1"/>
<dbReference type="BioMuta" id="HGNC:24851"/>
<dbReference type="MassIVE" id="A6NMB1"/>
<dbReference type="PeptideAtlas" id="A6NMB1"/>
<dbReference type="ProteomicsDB" id="1527"/>
<dbReference type="AGR" id="HGNC:24851"/>
<dbReference type="GeneCards" id="SIGLEC16"/>
<dbReference type="HGNC" id="HGNC:24851">
    <property type="gene designation" value="SIGLEC16"/>
</dbReference>
<dbReference type="neXtProt" id="NX_A6NMB1"/>
<dbReference type="InParanoid" id="A6NMB1"/>
<dbReference type="PAN-GO" id="A6NMB1">
    <property type="GO annotations" value="3 GO annotations based on evolutionary models"/>
</dbReference>
<dbReference type="PhylomeDB" id="A6NMB1"/>
<dbReference type="TreeFam" id="TF332441"/>
<dbReference type="PathwayCommons" id="A6NMB1"/>
<dbReference type="Reactome" id="R-HSA-2172127">
    <property type="pathway name" value="DAP12 interactions"/>
</dbReference>
<dbReference type="ChiTaRS" id="SIGLEC16">
    <property type="organism name" value="human"/>
</dbReference>
<dbReference type="Pharos" id="A6NMB1">
    <property type="development level" value="Tdark"/>
</dbReference>
<dbReference type="PRO" id="PR:A6NMB1"/>
<dbReference type="Proteomes" id="UP000005640">
    <property type="component" value="Unplaced"/>
</dbReference>
<dbReference type="RNAct" id="A6NMB1">
    <property type="molecule type" value="protein"/>
</dbReference>
<dbReference type="GO" id="GO:0005886">
    <property type="term" value="C:plasma membrane"/>
    <property type="evidence" value="ECO:0000318"/>
    <property type="project" value="GO_Central"/>
</dbReference>
<dbReference type="GO" id="GO:0030246">
    <property type="term" value="F:carbohydrate binding"/>
    <property type="evidence" value="ECO:0007669"/>
    <property type="project" value="UniProtKB-KW"/>
</dbReference>
<dbReference type="GO" id="GO:0033691">
    <property type="term" value="F:sialic acid binding"/>
    <property type="evidence" value="ECO:0000318"/>
    <property type="project" value="GO_Central"/>
</dbReference>
<dbReference type="GO" id="GO:0007155">
    <property type="term" value="P:cell adhesion"/>
    <property type="evidence" value="ECO:0000318"/>
    <property type="project" value="GO_Central"/>
</dbReference>
<dbReference type="GO" id="GO:1900426">
    <property type="term" value="P:positive regulation of defense response to bacterium"/>
    <property type="evidence" value="ECO:0000314"/>
    <property type="project" value="UniProtKB"/>
</dbReference>
<dbReference type="GO" id="GO:0032755">
    <property type="term" value="P:positive regulation of interleukin-6 production"/>
    <property type="evidence" value="ECO:0000314"/>
    <property type="project" value="UniProtKB"/>
</dbReference>
<dbReference type="CDD" id="cd20987">
    <property type="entry name" value="IgC2_CD33_d2_like"/>
    <property type="match status" value="1"/>
</dbReference>
<dbReference type="CDD" id="cd05712">
    <property type="entry name" value="IgV_CD33"/>
    <property type="match status" value="1"/>
</dbReference>
<dbReference type="FunFam" id="2.60.40.10:FF:000994">
    <property type="entry name" value="Sialic acid binding Ig like lectin 10"/>
    <property type="match status" value="2"/>
</dbReference>
<dbReference type="FunFam" id="2.60.40.10:FF:001242">
    <property type="entry name" value="Sialic acid binding Ig like lectin 11"/>
    <property type="match status" value="1"/>
</dbReference>
<dbReference type="FunFam" id="2.60.40.10:FF:000829">
    <property type="entry name" value="Sialic acid-binding Ig-like lectin 8"/>
    <property type="match status" value="1"/>
</dbReference>
<dbReference type="Gene3D" id="2.60.40.10">
    <property type="entry name" value="Immunoglobulins"/>
    <property type="match status" value="4"/>
</dbReference>
<dbReference type="InterPro" id="IPR007110">
    <property type="entry name" value="Ig-like_dom"/>
</dbReference>
<dbReference type="InterPro" id="IPR036179">
    <property type="entry name" value="Ig-like_dom_sf"/>
</dbReference>
<dbReference type="InterPro" id="IPR013783">
    <property type="entry name" value="Ig-like_fold"/>
</dbReference>
<dbReference type="InterPro" id="IPR003006">
    <property type="entry name" value="Ig/MHC_CS"/>
</dbReference>
<dbReference type="InterPro" id="IPR013098">
    <property type="entry name" value="Ig_I-set"/>
</dbReference>
<dbReference type="InterPro" id="IPR003599">
    <property type="entry name" value="Ig_sub"/>
</dbReference>
<dbReference type="InterPro" id="IPR003598">
    <property type="entry name" value="Ig_sub2"/>
</dbReference>
<dbReference type="InterPro" id="IPR013106">
    <property type="entry name" value="Ig_V-set"/>
</dbReference>
<dbReference type="InterPro" id="IPR051036">
    <property type="entry name" value="SIGLEC"/>
</dbReference>
<dbReference type="PANTHER" id="PTHR12035">
    <property type="entry name" value="SIALIC ACID BINDING IMMUNOGLOBULIN-LIKE LECTIN"/>
    <property type="match status" value="1"/>
</dbReference>
<dbReference type="PANTHER" id="PTHR12035:SF127">
    <property type="entry name" value="SIALIC ACID-BINDING IG-LIKE LECTIN 11"/>
    <property type="match status" value="1"/>
</dbReference>
<dbReference type="Pfam" id="PF07679">
    <property type="entry name" value="I-set"/>
    <property type="match status" value="1"/>
</dbReference>
<dbReference type="Pfam" id="PF13927">
    <property type="entry name" value="Ig_3"/>
    <property type="match status" value="1"/>
</dbReference>
<dbReference type="Pfam" id="PF07686">
    <property type="entry name" value="V-set"/>
    <property type="match status" value="1"/>
</dbReference>
<dbReference type="SMART" id="SM00409">
    <property type="entry name" value="IG"/>
    <property type="match status" value="4"/>
</dbReference>
<dbReference type="SMART" id="SM00408">
    <property type="entry name" value="IGc2"/>
    <property type="match status" value="2"/>
</dbReference>
<dbReference type="SUPFAM" id="SSF48726">
    <property type="entry name" value="Immunoglobulin"/>
    <property type="match status" value="4"/>
</dbReference>
<dbReference type="PROSITE" id="PS50835">
    <property type="entry name" value="IG_LIKE"/>
    <property type="match status" value="3"/>
</dbReference>
<reference key="1">
    <citation type="journal article" date="2004" name="Nature">
        <title>The DNA sequence and biology of human chromosome 19.</title>
        <authorList>
            <person name="Grimwood J."/>
            <person name="Gordon L.A."/>
            <person name="Olsen A.S."/>
            <person name="Terry A."/>
            <person name="Schmutz J."/>
            <person name="Lamerdin J.E."/>
            <person name="Hellsten U."/>
            <person name="Goodstein D."/>
            <person name="Couronne O."/>
            <person name="Tran-Gyamfi M."/>
            <person name="Aerts A."/>
            <person name="Altherr M."/>
            <person name="Ashworth L."/>
            <person name="Bajorek E."/>
            <person name="Black S."/>
            <person name="Branscomb E."/>
            <person name="Caenepeel S."/>
            <person name="Carrano A.V."/>
            <person name="Caoile C."/>
            <person name="Chan Y.M."/>
            <person name="Christensen M."/>
            <person name="Cleland C.A."/>
            <person name="Copeland A."/>
            <person name="Dalin E."/>
            <person name="Dehal P."/>
            <person name="Denys M."/>
            <person name="Detter J.C."/>
            <person name="Escobar J."/>
            <person name="Flowers D."/>
            <person name="Fotopulos D."/>
            <person name="Garcia C."/>
            <person name="Georgescu A.M."/>
            <person name="Glavina T."/>
            <person name="Gomez M."/>
            <person name="Gonzales E."/>
            <person name="Groza M."/>
            <person name="Hammon N."/>
            <person name="Hawkins T."/>
            <person name="Haydu L."/>
            <person name="Ho I."/>
            <person name="Huang W."/>
            <person name="Israni S."/>
            <person name="Jett J."/>
            <person name="Kadner K."/>
            <person name="Kimball H."/>
            <person name="Kobayashi A."/>
            <person name="Larionov V."/>
            <person name="Leem S.-H."/>
            <person name="Lopez F."/>
            <person name="Lou Y."/>
            <person name="Lowry S."/>
            <person name="Malfatti S."/>
            <person name="Martinez D."/>
            <person name="McCready P.M."/>
            <person name="Medina C."/>
            <person name="Morgan J."/>
            <person name="Nelson K."/>
            <person name="Nolan M."/>
            <person name="Ovcharenko I."/>
            <person name="Pitluck S."/>
            <person name="Pollard M."/>
            <person name="Popkie A.P."/>
            <person name="Predki P."/>
            <person name="Quan G."/>
            <person name="Ramirez L."/>
            <person name="Rash S."/>
            <person name="Retterer J."/>
            <person name="Rodriguez A."/>
            <person name="Rogers S."/>
            <person name="Salamov A."/>
            <person name="Salazar A."/>
            <person name="She X."/>
            <person name="Smith D."/>
            <person name="Slezak T."/>
            <person name="Solovyev V."/>
            <person name="Thayer N."/>
            <person name="Tice H."/>
            <person name="Tsai M."/>
            <person name="Ustaszewska A."/>
            <person name="Vo N."/>
            <person name="Wagner M."/>
            <person name="Wheeler J."/>
            <person name="Wu K."/>
            <person name="Xie G."/>
            <person name="Yang J."/>
            <person name="Dubchak I."/>
            <person name="Furey T.S."/>
            <person name="DeJong P."/>
            <person name="Dickson M."/>
            <person name="Gordon D."/>
            <person name="Eichler E.E."/>
            <person name="Pennacchio L.A."/>
            <person name="Richardson P."/>
            <person name="Stubbs L."/>
            <person name="Rokhsar D.S."/>
            <person name="Myers R.M."/>
            <person name="Rubin E.M."/>
            <person name="Lucas S.M."/>
        </authorList>
    </citation>
    <scope>NUCLEOTIDE SEQUENCE [LARGE SCALE GENOMIC DNA]</scope>
</reference>
<reference key="2">
    <citation type="journal article" date="2004" name="Genome Res.">
        <title>The status, quality, and expansion of the NIH full-length cDNA project: the Mammalian Gene Collection (MGC).</title>
        <authorList>
            <consortium name="The MGC Project Team"/>
        </authorList>
    </citation>
    <scope>NUCLEOTIDE SEQUENCE [LARGE SCALE MRNA]</scope>
</reference>
<reference key="3">
    <citation type="journal article" date="2002" name="J. Biol. Chem.">
        <title>Cloning and characterization of human Siglec-11. A recently evolved signaling molecule that can interact with SHP-1 and SHP-2 and is expressed by tissue macrophages, including brain microglia.</title>
        <authorList>
            <person name="Angata T."/>
            <person name="Kerr S.C."/>
            <person name="Greaves D.R."/>
            <person name="Varki N.M."/>
            <person name="Crocker P.R."/>
            <person name="Varki A."/>
        </authorList>
    </citation>
    <scope>IDENTIFICATION</scope>
</reference>
<reference key="4">
    <citation type="journal article" date="2008" name="Eur. J. Immunol.">
        <title>SIGLEC16 encodes a DAP12-associated receptor expressed in macrophages that evolved from its inhibitory counterpart SIGLEC11 and has functional and non-functional alleles in humans.</title>
        <authorList>
            <person name="Cao H."/>
            <person name="Lakner U."/>
            <person name="de Bono B."/>
            <person name="Traherne J.A."/>
            <person name="Trowsdale J."/>
            <person name="Barrow A.D."/>
        </authorList>
    </citation>
    <scope>TISSUE SPECIFICITY</scope>
    <scope>SUBCELLULAR LOCATION</scope>
</reference>
<gene>
    <name type="primary">SIGLEC16</name>
    <name type="synonym">SIGLECP16</name>
</gene>